<evidence type="ECO:0000255" key="1">
    <source>
        <dbReference type="HAMAP-Rule" id="MF_01563"/>
    </source>
</evidence>
<proteinExistence type="inferred from homology"/>
<comment type="function">
    <text evidence="1">Represses ulaG and the ulaABCDEF operon.</text>
</comment>
<comment type="subcellular location">
    <subcellularLocation>
        <location evidence="1">Cytoplasm</location>
    </subcellularLocation>
</comment>
<protein>
    <recommendedName>
        <fullName evidence="1">HTH-type transcriptional regulator UlaR</fullName>
    </recommendedName>
</protein>
<accession>Q1R369</accession>
<name>ULAR_ECOUT</name>
<feature type="chain" id="PRO_1000069050" description="HTH-type transcriptional regulator UlaR">
    <location>
        <begin position="1"/>
        <end position="251"/>
    </location>
</feature>
<feature type="domain" description="HTH deoR-type" evidence="1">
    <location>
        <begin position="3"/>
        <end position="58"/>
    </location>
</feature>
<feature type="DNA-binding region" description="H-T-H motif" evidence="1">
    <location>
        <begin position="20"/>
        <end position="39"/>
    </location>
</feature>
<reference key="1">
    <citation type="journal article" date="2006" name="Proc. Natl. Acad. Sci. U.S.A.">
        <title>Identification of genes subject to positive selection in uropathogenic strains of Escherichia coli: a comparative genomics approach.</title>
        <authorList>
            <person name="Chen S.L."/>
            <person name="Hung C.-S."/>
            <person name="Xu J."/>
            <person name="Reigstad C.S."/>
            <person name="Magrini V."/>
            <person name="Sabo A."/>
            <person name="Blasiar D."/>
            <person name="Bieri T."/>
            <person name="Meyer R.R."/>
            <person name="Ozersky P."/>
            <person name="Armstrong J.R."/>
            <person name="Fulton R.S."/>
            <person name="Latreille J.P."/>
            <person name="Spieth J."/>
            <person name="Hooton T.M."/>
            <person name="Mardis E.R."/>
            <person name="Hultgren S.J."/>
            <person name="Gordon J.I."/>
        </authorList>
    </citation>
    <scope>NUCLEOTIDE SEQUENCE [LARGE SCALE GENOMIC DNA]</scope>
    <source>
        <strain>UTI89 / UPEC</strain>
    </source>
</reference>
<dbReference type="EMBL" id="CP000243">
    <property type="protein sequence ID" value="ABE10195.1"/>
    <property type="molecule type" value="Genomic_DNA"/>
</dbReference>
<dbReference type="RefSeq" id="WP_000133631.1">
    <property type="nucleotide sequence ID" value="NZ_CP064825.1"/>
</dbReference>
<dbReference type="SMR" id="Q1R369"/>
<dbReference type="GeneID" id="75202425"/>
<dbReference type="KEGG" id="eci:UTI89_C4791"/>
<dbReference type="HOGENOM" id="CLU_060699_3_2_6"/>
<dbReference type="Proteomes" id="UP000001952">
    <property type="component" value="Chromosome"/>
</dbReference>
<dbReference type="GO" id="GO:0005737">
    <property type="term" value="C:cytoplasm"/>
    <property type="evidence" value="ECO:0007669"/>
    <property type="project" value="UniProtKB-SubCell"/>
</dbReference>
<dbReference type="GO" id="GO:0003677">
    <property type="term" value="F:DNA binding"/>
    <property type="evidence" value="ECO:0007669"/>
    <property type="project" value="UniProtKB-KW"/>
</dbReference>
<dbReference type="GO" id="GO:0003700">
    <property type="term" value="F:DNA-binding transcription factor activity"/>
    <property type="evidence" value="ECO:0007669"/>
    <property type="project" value="InterPro"/>
</dbReference>
<dbReference type="GO" id="GO:0045892">
    <property type="term" value="P:negative regulation of DNA-templated transcription"/>
    <property type="evidence" value="ECO:0007669"/>
    <property type="project" value="UniProtKB-UniRule"/>
</dbReference>
<dbReference type="FunFam" id="1.10.10.10:FF:000160">
    <property type="entry name" value="HTH-type transcriptional regulator UlaR"/>
    <property type="match status" value="1"/>
</dbReference>
<dbReference type="Gene3D" id="1.10.10.10">
    <property type="entry name" value="Winged helix-like DNA-binding domain superfamily/Winged helix DNA-binding domain"/>
    <property type="match status" value="1"/>
</dbReference>
<dbReference type="HAMAP" id="MF_01563">
    <property type="entry name" value="HTH_type_UlaR"/>
    <property type="match status" value="1"/>
</dbReference>
<dbReference type="InterPro" id="IPR050313">
    <property type="entry name" value="Carb_Metab_HTH_regulators"/>
</dbReference>
<dbReference type="InterPro" id="IPR014036">
    <property type="entry name" value="DeoR-like_C"/>
</dbReference>
<dbReference type="InterPro" id="IPR001034">
    <property type="entry name" value="DeoR_HTH"/>
</dbReference>
<dbReference type="InterPro" id="IPR037171">
    <property type="entry name" value="NagB/RpiA_transferase-like"/>
</dbReference>
<dbReference type="InterPro" id="IPR018356">
    <property type="entry name" value="Tscrpt_reg_HTH_DeoR_CS"/>
</dbReference>
<dbReference type="InterPro" id="IPR023711">
    <property type="entry name" value="Tscrpt_reg_HTH_UlaR"/>
</dbReference>
<dbReference type="InterPro" id="IPR036388">
    <property type="entry name" value="WH-like_DNA-bd_sf"/>
</dbReference>
<dbReference type="InterPro" id="IPR036390">
    <property type="entry name" value="WH_DNA-bd_sf"/>
</dbReference>
<dbReference type="NCBIfam" id="NF010034">
    <property type="entry name" value="PRK13509.1"/>
    <property type="match status" value="1"/>
</dbReference>
<dbReference type="PANTHER" id="PTHR30363">
    <property type="entry name" value="HTH-TYPE TRANSCRIPTIONAL REGULATOR SRLR-RELATED"/>
    <property type="match status" value="1"/>
</dbReference>
<dbReference type="PANTHER" id="PTHR30363:SF55">
    <property type="entry name" value="HTH-TYPE TRANSCRIPTIONAL REGULATOR ULAR"/>
    <property type="match status" value="1"/>
</dbReference>
<dbReference type="Pfam" id="PF00455">
    <property type="entry name" value="DeoRC"/>
    <property type="match status" value="1"/>
</dbReference>
<dbReference type="Pfam" id="PF08220">
    <property type="entry name" value="HTH_DeoR"/>
    <property type="match status" value="1"/>
</dbReference>
<dbReference type="PRINTS" id="PR00037">
    <property type="entry name" value="HTHLACR"/>
</dbReference>
<dbReference type="SMART" id="SM01134">
    <property type="entry name" value="DeoRC"/>
    <property type="match status" value="1"/>
</dbReference>
<dbReference type="SMART" id="SM00420">
    <property type="entry name" value="HTH_DEOR"/>
    <property type="match status" value="1"/>
</dbReference>
<dbReference type="SUPFAM" id="SSF100950">
    <property type="entry name" value="NagB/RpiA/CoA transferase-like"/>
    <property type="match status" value="1"/>
</dbReference>
<dbReference type="SUPFAM" id="SSF46785">
    <property type="entry name" value="Winged helix' DNA-binding domain"/>
    <property type="match status" value="1"/>
</dbReference>
<dbReference type="PROSITE" id="PS00894">
    <property type="entry name" value="HTH_DEOR_1"/>
    <property type="match status" value="1"/>
</dbReference>
<dbReference type="PROSITE" id="PS51000">
    <property type="entry name" value="HTH_DEOR_2"/>
    <property type="match status" value="1"/>
</dbReference>
<keyword id="KW-0963">Cytoplasm</keyword>
<keyword id="KW-0238">DNA-binding</keyword>
<keyword id="KW-0678">Repressor</keyword>
<keyword id="KW-0804">Transcription</keyword>
<keyword id="KW-0805">Transcription regulation</keyword>
<organism>
    <name type="scientific">Escherichia coli (strain UTI89 / UPEC)</name>
    <dbReference type="NCBI Taxonomy" id="364106"/>
    <lineage>
        <taxon>Bacteria</taxon>
        <taxon>Pseudomonadati</taxon>
        <taxon>Pseudomonadota</taxon>
        <taxon>Gammaproteobacteria</taxon>
        <taxon>Enterobacterales</taxon>
        <taxon>Enterobacteriaceae</taxon>
        <taxon>Escherichia</taxon>
    </lineage>
</organism>
<gene>
    <name evidence="1" type="primary">ulaR</name>
    <name type="ordered locus">UTI89_C4791</name>
</gene>
<sequence>MTEAQRHQILLEMLAQLGFVTVEKVVERLGISPATARRDINKLDESGKLKKVRNGAEAITQQRPRWTPMNLHQAQNHDEKVRIAKAASQLVNPGESVVINCGSTAFLLGREMCGKPVQIITNYLPLANYLIDQEHDSVIIMGGQYNKSQSITLSPQGSENSLYAGHWMFTSGKGLTAEGLYKTDMLTAMAEQKMLSVVGKLVVLVDSSKIGERAGMLFSRADQIDMLITGKNANPEILQQLEAQGVSILRV</sequence>